<comment type="function">
    <text evidence="1">Produces ATP from ADP in the presence of a proton gradient across the membrane. The gamma chain is believed to be important in regulating ATPase activity and the flow of protons through the CF(0) complex.</text>
</comment>
<comment type="subunit">
    <text evidence="1">F-type ATPases have 2 components, CF(1) - the catalytic core - and CF(0) - the membrane proton channel. CF(1) has five subunits: alpha(3), beta(3), gamma(1), delta(1), epsilon(1). CF(0) has three main subunits: a, b and c.</text>
</comment>
<comment type="subcellular location">
    <subcellularLocation>
        <location evidence="1">Cellular thylakoid membrane</location>
        <topology evidence="1">Peripheral membrane protein</topology>
    </subcellularLocation>
</comment>
<comment type="similarity">
    <text evidence="1">Belongs to the ATPase gamma chain family.</text>
</comment>
<keyword id="KW-0066">ATP synthesis</keyword>
<keyword id="KW-0139">CF(1)</keyword>
<keyword id="KW-0375">Hydrogen ion transport</keyword>
<keyword id="KW-0406">Ion transport</keyword>
<keyword id="KW-0472">Membrane</keyword>
<keyword id="KW-1185">Reference proteome</keyword>
<keyword id="KW-0793">Thylakoid</keyword>
<keyword id="KW-0813">Transport</keyword>
<feature type="chain" id="PRO_1000134189" description="ATP synthase gamma chain">
    <location>
        <begin position="1"/>
        <end position="316"/>
    </location>
</feature>
<protein>
    <recommendedName>
        <fullName evidence="1">ATP synthase gamma chain</fullName>
    </recommendedName>
    <alternativeName>
        <fullName evidence="1">ATP synthase F1 sector gamma subunit</fullName>
    </alternativeName>
    <alternativeName>
        <fullName evidence="1">F-ATPase gamma subunit</fullName>
    </alternativeName>
</protein>
<dbReference type="EMBL" id="CP000878">
    <property type="protein sequence ID" value="ABX09500.1"/>
    <property type="molecule type" value="Genomic_DNA"/>
</dbReference>
<dbReference type="RefSeq" id="WP_012196121.1">
    <property type="nucleotide sequence ID" value="NC_009976.1"/>
</dbReference>
<dbReference type="SMR" id="A9BCD8"/>
<dbReference type="STRING" id="93059.P9211_15691"/>
<dbReference type="KEGG" id="pmj:P9211_15691"/>
<dbReference type="eggNOG" id="COG0224">
    <property type="taxonomic scope" value="Bacteria"/>
</dbReference>
<dbReference type="HOGENOM" id="CLU_050669_0_0_3"/>
<dbReference type="OrthoDB" id="9812769at2"/>
<dbReference type="Proteomes" id="UP000000788">
    <property type="component" value="Chromosome"/>
</dbReference>
<dbReference type="GO" id="GO:0031676">
    <property type="term" value="C:plasma membrane-derived thylakoid membrane"/>
    <property type="evidence" value="ECO:0007669"/>
    <property type="project" value="UniProtKB-SubCell"/>
</dbReference>
<dbReference type="GO" id="GO:0045259">
    <property type="term" value="C:proton-transporting ATP synthase complex"/>
    <property type="evidence" value="ECO:0007669"/>
    <property type="project" value="UniProtKB-KW"/>
</dbReference>
<dbReference type="GO" id="GO:0005524">
    <property type="term" value="F:ATP binding"/>
    <property type="evidence" value="ECO:0007669"/>
    <property type="project" value="UniProtKB-UniRule"/>
</dbReference>
<dbReference type="GO" id="GO:0046933">
    <property type="term" value="F:proton-transporting ATP synthase activity, rotational mechanism"/>
    <property type="evidence" value="ECO:0007669"/>
    <property type="project" value="UniProtKB-UniRule"/>
</dbReference>
<dbReference type="CDD" id="cd12151">
    <property type="entry name" value="F1-ATPase_gamma"/>
    <property type="match status" value="1"/>
</dbReference>
<dbReference type="FunFam" id="3.40.1380.10:FF:000006">
    <property type="entry name" value="ATP synthase gamma chain"/>
    <property type="match status" value="1"/>
</dbReference>
<dbReference type="FunFam" id="1.10.287.80:FF:000003">
    <property type="entry name" value="ATP synthase gamma chain, chloroplastic"/>
    <property type="match status" value="1"/>
</dbReference>
<dbReference type="Gene3D" id="3.40.1380.10">
    <property type="match status" value="1"/>
</dbReference>
<dbReference type="Gene3D" id="1.10.287.80">
    <property type="entry name" value="ATP synthase, gamma subunit, helix hairpin domain"/>
    <property type="match status" value="2"/>
</dbReference>
<dbReference type="HAMAP" id="MF_00815">
    <property type="entry name" value="ATP_synth_gamma_bact"/>
    <property type="match status" value="1"/>
</dbReference>
<dbReference type="InterPro" id="IPR035968">
    <property type="entry name" value="ATP_synth_F1_ATPase_gsu"/>
</dbReference>
<dbReference type="InterPro" id="IPR000131">
    <property type="entry name" value="ATP_synth_F1_gsu"/>
</dbReference>
<dbReference type="NCBIfam" id="TIGR01146">
    <property type="entry name" value="ATPsyn_F1gamma"/>
    <property type="match status" value="1"/>
</dbReference>
<dbReference type="NCBIfam" id="NF004145">
    <property type="entry name" value="PRK05621.1-2"/>
    <property type="match status" value="1"/>
</dbReference>
<dbReference type="PANTHER" id="PTHR11693">
    <property type="entry name" value="ATP SYNTHASE GAMMA CHAIN"/>
    <property type="match status" value="1"/>
</dbReference>
<dbReference type="PANTHER" id="PTHR11693:SF41">
    <property type="entry name" value="ATP SYNTHASE GAMMA CHAIN, CHLOROPLASTIC"/>
    <property type="match status" value="1"/>
</dbReference>
<dbReference type="Pfam" id="PF00231">
    <property type="entry name" value="ATP-synt"/>
    <property type="match status" value="1"/>
</dbReference>
<dbReference type="PRINTS" id="PR00126">
    <property type="entry name" value="ATPASEGAMMA"/>
</dbReference>
<dbReference type="SUPFAM" id="SSF52943">
    <property type="entry name" value="ATP synthase (F1-ATPase), gamma subunit"/>
    <property type="match status" value="1"/>
</dbReference>
<sequence>MANLKEIRDRIVSVKNTRKITEAMRLVAAAKVRRAQEQVLRSRPFADRLARVLQNIQSRMQFETADAPLLKSRDVRTITLLAVTGDRGLCGGYNTNIIKRTEQRYNELKRQGFTPDLVLIGRKAIGYFQNRSSQYKIRAFFQDLEQVPTSKDAESVTSEILAEFLSKSTDRIEVIYTKFISLVSCNPVVQTLLPLDPQGIAEEDDEMFRLTTKNSRLVVEKDAAPSNEQPKLPSDVVFEQSPDQLLNALLPLYLQNQLLRALQESAASELASRMTAMNNASDNAKELAKTLNLTYNKARQAAITQEILEVVGGSSS</sequence>
<name>ATPG_PROM4</name>
<organism>
    <name type="scientific">Prochlorococcus marinus (strain MIT 9211)</name>
    <dbReference type="NCBI Taxonomy" id="93059"/>
    <lineage>
        <taxon>Bacteria</taxon>
        <taxon>Bacillati</taxon>
        <taxon>Cyanobacteriota</taxon>
        <taxon>Cyanophyceae</taxon>
        <taxon>Synechococcales</taxon>
        <taxon>Prochlorococcaceae</taxon>
        <taxon>Prochlorococcus</taxon>
    </lineage>
</organism>
<gene>
    <name evidence="1" type="primary">atpG</name>
    <name evidence="1" type="synonym">atpC</name>
    <name type="ordered locus">P9211_15691</name>
</gene>
<evidence type="ECO:0000255" key="1">
    <source>
        <dbReference type="HAMAP-Rule" id="MF_00815"/>
    </source>
</evidence>
<accession>A9BCD8</accession>
<proteinExistence type="inferred from homology"/>
<reference key="1">
    <citation type="journal article" date="2007" name="PLoS Genet.">
        <title>Patterns and implications of gene gain and loss in the evolution of Prochlorococcus.</title>
        <authorList>
            <person name="Kettler G.C."/>
            <person name="Martiny A.C."/>
            <person name="Huang K."/>
            <person name="Zucker J."/>
            <person name="Coleman M.L."/>
            <person name="Rodrigue S."/>
            <person name="Chen F."/>
            <person name="Lapidus A."/>
            <person name="Ferriera S."/>
            <person name="Johnson J."/>
            <person name="Steglich C."/>
            <person name="Church G.M."/>
            <person name="Richardson P."/>
            <person name="Chisholm S.W."/>
        </authorList>
    </citation>
    <scope>NUCLEOTIDE SEQUENCE [LARGE SCALE GENOMIC DNA]</scope>
    <source>
        <strain>MIT 9211</strain>
    </source>
</reference>